<comment type="function">
    <text evidence="1">Forms part of the ribosomal stalk which helps the ribosome interact with GTP-bound translation factors.</text>
</comment>
<comment type="subunit">
    <text evidence="1">Part of the ribosomal stalk of the 50S ribosomal subunit. Interacts with L10 and the large rRNA to form the base of the stalk. L10 forms an elongated spine to which L12 dimers bind in a sequential fashion forming a multimeric L10(L12)X complex.</text>
</comment>
<comment type="PTM">
    <text evidence="1">One or more lysine residues are methylated.</text>
</comment>
<comment type="similarity">
    <text evidence="1">Belongs to the universal ribosomal protein uL11 family.</text>
</comment>
<keyword id="KW-0488">Methylation</keyword>
<keyword id="KW-1185">Reference proteome</keyword>
<keyword id="KW-0687">Ribonucleoprotein</keyword>
<keyword id="KW-0689">Ribosomal protein</keyword>
<keyword id="KW-0694">RNA-binding</keyword>
<keyword id="KW-0699">rRNA-binding</keyword>
<evidence type="ECO:0000255" key="1">
    <source>
        <dbReference type="HAMAP-Rule" id="MF_00736"/>
    </source>
</evidence>
<evidence type="ECO:0000305" key="2"/>
<gene>
    <name evidence="1" type="primary">rplK</name>
    <name type="ordered locus">PSHAa0218</name>
</gene>
<protein>
    <recommendedName>
        <fullName evidence="1">Large ribosomal subunit protein uL11</fullName>
    </recommendedName>
    <alternativeName>
        <fullName evidence="2">50S ribosomal protein L11</fullName>
    </alternativeName>
</protein>
<organism>
    <name type="scientific">Pseudoalteromonas translucida (strain TAC 125)</name>
    <dbReference type="NCBI Taxonomy" id="326442"/>
    <lineage>
        <taxon>Bacteria</taxon>
        <taxon>Pseudomonadati</taxon>
        <taxon>Pseudomonadota</taxon>
        <taxon>Gammaproteobacteria</taxon>
        <taxon>Alteromonadales</taxon>
        <taxon>Pseudoalteromonadaceae</taxon>
        <taxon>Pseudoalteromonas</taxon>
    </lineage>
</organism>
<proteinExistence type="inferred from homology"/>
<sequence>MAKKVEALIKLQVNAGMANPSPPVGPALGQHGVNIMEFCKAFNARTESIEKGAPVPVVISVYGDRSFTFDMKTPPAAYLLLKAAGVKSGSGRPNTEKVGTVTRAQLEEIVETKRADLTASDLEAAVRTIAGSARAMGLSVED</sequence>
<name>RL11_PSET1</name>
<feature type="chain" id="PRO_0000258186" description="Large ribosomal subunit protein uL11">
    <location>
        <begin position="1"/>
        <end position="142"/>
    </location>
</feature>
<dbReference type="EMBL" id="CR954246">
    <property type="protein sequence ID" value="CAI85321.1"/>
    <property type="molecule type" value="Genomic_DNA"/>
</dbReference>
<dbReference type="SMR" id="Q3ILQ4"/>
<dbReference type="STRING" id="326442.PSHAa0218"/>
<dbReference type="KEGG" id="pha:PSHAa0218"/>
<dbReference type="PATRIC" id="fig|326442.8.peg.209"/>
<dbReference type="eggNOG" id="COG0080">
    <property type="taxonomic scope" value="Bacteria"/>
</dbReference>
<dbReference type="HOGENOM" id="CLU_074237_2_0_6"/>
<dbReference type="BioCyc" id="PHAL326442:PSHA_RS01075-MONOMER"/>
<dbReference type="Proteomes" id="UP000006843">
    <property type="component" value="Chromosome I"/>
</dbReference>
<dbReference type="GO" id="GO:0022625">
    <property type="term" value="C:cytosolic large ribosomal subunit"/>
    <property type="evidence" value="ECO:0007669"/>
    <property type="project" value="TreeGrafter"/>
</dbReference>
<dbReference type="GO" id="GO:0070180">
    <property type="term" value="F:large ribosomal subunit rRNA binding"/>
    <property type="evidence" value="ECO:0007669"/>
    <property type="project" value="UniProtKB-UniRule"/>
</dbReference>
<dbReference type="GO" id="GO:0003735">
    <property type="term" value="F:structural constituent of ribosome"/>
    <property type="evidence" value="ECO:0007669"/>
    <property type="project" value="InterPro"/>
</dbReference>
<dbReference type="GO" id="GO:0006412">
    <property type="term" value="P:translation"/>
    <property type="evidence" value="ECO:0007669"/>
    <property type="project" value="UniProtKB-UniRule"/>
</dbReference>
<dbReference type="CDD" id="cd00349">
    <property type="entry name" value="Ribosomal_L11"/>
    <property type="match status" value="1"/>
</dbReference>
<dbReference type="FunFam" id="1.10.10.250:FF:000001">
    <property type="entry name" value="50S ribosomal protein L11"/>
    <property type="match status" value="1"/>
</dbReference>
<dbReference type="FunFam" id="3.30.1550.10:FF:000001">
    <property type="entry name" value="50S ribosomal protein L11"/>
    <property type="match status" value="1"/>
</dbReference>
<dbReference type="Gene3D" id="1.10.10.250">
    <property type="entry name" value="Ribosomal protein L11, C-terminal domain"/>
    <property type="match status" value="1"/>
</dbReference>
<dbReference type="Gene3D" id="3.30.1550.10">
    <property type="entry name" value="Ribosomal protein L11/L12, N-terminal domain"/>
    <property type="match status" value="1"/>
</dbReference>
<dbReference type="HAMAP" id="MF_00736">
    <property type="entry name" value="Ribosomal_uL11"/>
    <property type="match status" value="1"/>
</dbReference>
<dbReference type="InterPro" id="IPR000911">
    <property type="entry name" value="Ribosomal_uL11"/>
</dbReference>
<dbReference type="InterPro" id="IPR006519">
    <property type="entry name" value="Ribosomal_uL11_bac-typ"/>
</dbReference>
<dbReference type="InterPro" id="IPR020783">
    <property type="entry name" value="Ribosomal_uL11_C"/>
</dbReference>
<dbReference type="InterPro" id="IPR036769">
    <property type="entry name" value="Ribosomal_uL11_C_sf"/>
</dbReference>
<dbReference type="InterPro" id="IPR020784">
    <property type="entry name" value="Ribosomal_uL11_N"/>
</dbReference>
<dbReference type="InterPro" id="IPR036796">
    <property type="entry name" value="Ribosomal_uL11_N_sf"/>
</dbReference>
<dbReference type="NCBIfam" id="TIGR01632">
    <property type="entry name" value="L11_bact"/>
    <property type="match status" value="1"/>
</dbReference>
<dbReference type="PANTHER" id="PTHR11661">
    <property type="entry name" value="60S RIBOSOMAL PROTEIN L12"/>
    <property type="match status" value="1"/>
</dbReference>
<dbReference type="PANTHER" id="PTHR11661:SF1">
    <property type="entry name" value="LARGE RIBOSOMAL SUBUNIT PROTEIN UL11M"/>
    <property type="match status" value="1"/>
</dbReference>
<dbReference type="Pfam" id="PF00298">
    <property type="entry name" value="Ribosomal_L11"/>
    <property type="match status" value="1"/>
</dbReference>
<dbReference type="Pfam" id="PF03946">
    <property type="entry name" value="Ribosomal_L11_N"/>
    <property type="match status" value="1"/>
</dbReference>
<dbReference type="SMART" id="SM00649">
    <property type="entry name" value="RL11"/>
    <property type="match status" value="1"/>
</dbReference>
<dbReference type="SUPFAM" id="SSF54747">
    <property type="entry name" value="Ribosomal L11/L12e N-terminal domain"/>
    <property type="match status" value="1"/>
</dbReference>
<dbReference type="SUPFAM" id="SSF46906">
    <property type="entry name" value="Ribosomal protein L11, C-terminal domain"/>
    <property type="match status" value="1"/>
</dbReference>
<reference key="1">
    <citation type="journal article" date="2005" name="Genome Res.">
        <title>Coping with cold: the genome of the versatile marine Antarctica bacterium Pseudoalteromonas haloplanktis TAC125.</title>
        <authorList>
            <person name="Medigue C."/>
            <person name="Krin E."/>
            <person name="Pascal G."/>
            <person name="Barbe V."/>
            <person name="Bernsel A."/>
            <person name="Bertin P.N."/>
            <person name="Cheung F."/>
            <person name="Cruveiller S."/>
            <person name="D'Amico S."/>
            <person name="Duilio A."/>
            <person name="Fang G."/>
            <person name="Feller G."/>
            <person name="Ho C."/>
            <person name="Mangenot S."/>
            <person name="Marino G."/>
            <person name="Nilsson J."/>
            <person name="Parrilli E."/>
            <person name="Rocha E.P.C."/>
            <person name="Rouy Z."/>
            <person name="Sekowska A."/>
            <person name="Tutino M.L."/>
            <person name="Vallenet D."/>
            <person name="von Heijne G."/>
            <person name="Danchin A."/>
        </authorList>
    </citation>
    <scope>NUCLEOTIDE SEQUENCE [LARGE SCALE GENOMIC DNA]</scope>
    <source>
        <strain>TAC 125</strain>
    </source>
</reference>
<accession>Q3ILQ4</accession>